<organism>
    <name type="scientific">Salmonella newport (strain SL254)</name>
    <dbReference type="NCBI Taxonomy" id="423368"/>
    <lineage>
        <taxon>Bacteria</taxon>
        <taxon>Pseudomonadati</taxon>
        <taxon>Pseudomonadota</taxon>
        <taxon>Gammaproteobacteria</taxon>
        <taxon>Enterobacterales</taxon>
        <taxon>Enterobacteriaceae</taxon>
        <taxon>Salmonella</taxon>
    </lineage>
</organism>
<comment type="function">
    <text evidence="1">Catalyzes the transfer of 4-deoxy-4-formamido-L-arabinose from UDP to undecaprenyl phosphate. The modified arabinose is attached to lipid A and is required for resistance to polymyxin and cationic antimicrobial peptides.</text>
</comment>
<comment type="catalytic activity">
    <reaction evidence="1">
        <text>UDP-4-deoxy-4-formamido-beta-L-arabinose + di-trans,octa-cis-undecaprenyl phosphate = 4-deoxy-4-formamido-alpha-L-arabinopyranosyl di-trans,octa-cis-undecaprenyl phosphate + UDP</text>
        <dbReference type="Rhea" id="RHEA:27722"/>
        <dbReference type="ChEBI" id="CHEBI:58223"/>
        <dbReference type="ChEBI" id="CHEBI:58709"/>
        <dbReference type="ChEBI" id="CHEBI:58909"/>
        <dbReference type="ChEBI" id="CHEBI:60392"/>
        <dbReference type="EC" id="2.4.2.53"/>
    </reaction>
</comment>
<comment type="pathway">
    <text evidence="1">Glycolipid biosynthesis; 4-amino-4-deoxy-alpha-L-arabinose undecaprenyl phosphate biosynthesis; 4-amino-4-deoxy-alpha-L-arabinose undecaprenyl phosphate from UDP-4-deoxy-4-formamido-beta-L-arabinose and undecaprenyl phosphate: step 1/2.</text>
</comment>
<comment type="pathway">
    <text evidence="1">Bacterial outer membrane biogenesis; lipopolysaccharide biosynthesis.</text>
</comment>
<comment type="subcellular location">
    <subcellularLocation>
        <location evidence="1">Cell inner membrane</location>
        <topology evidence="1">Multi-pass membrane protein</topology>
    </subcellularLocation>
</comment>
<comment type="similarity">
    <text evidence="1">Belongs to the glycosyltransferase 2 family.</text>
</comment>
<reference key="1">
    <citation type="journal article" date="2011" name="J. Bacteriol.">
        <title>Comparative genomics of 28 Salmonella enterica isolates: evidence for CRISPR-mediated adaptive sublineage evolution.</title>
        <authorList>
            <person name="Fricke W.F."/>
            <person name="Mammel M.K."/>
            <person name="McDermott P.F."/>
            <person name="Tartera C."/>
            <person name="White D.G."/>
            <person name="Leclerc J.E."/>
            <person name="Ravel J."/>
            <person name="Cebula T.A."/>
        </authorList>
    </citation>
    <scope>NUCLEOTIDE SEQUENCE [LARGE SCALE GENOMIC DNA]</scope>
    <source>
        <strain>SL254</strain>
    </source>
</reference>
<proteinExistence type="inferred from homology"/>
<evidence type="ECO:0000255" key="1">
    <source>
        <dbReference type="HAMAP-Rule" id="MF_01164"/>
    </source>
</evidence>
<protein>
    <recommendedName>
        <fullName evidence="1">Undecaprenyl-phosphate 4-deoxy-4-formamido-L-arabinose transferase</fullName>
        <ecNumber evidence="1">2.4.2.53</ecNumber>
    </recommendedName>
    <alternativeName>
        <fullName evidence="1">Undecaprenyl-phosphate Ara4FN transferase</fullName>
        <shortName evidence="1">Ara4FN transferase</shortName>
    </alternativeName>
</protein>
<dbReference type="EC" id="2.4.2.53" evidence="1"/>
<dbReference type="EMBL" id="CP001113">
    <property type="protein sequence ID" value="ACF62196.1"/>
    <property type="molecule type" value="Genomic_DNA"/>
</dbReference>
<dbReference type="RefSeq" id="WP_000458894.1">
    <property type="nucleotide sequence ID" value="NZ_CCMR01000001.1"/>
</dbReference>
<dbReference type="SMR" id="B4SYX0"/>
<dbReference type="CAZy" id="GT2">
    <property type="family name" value="Glycosyltransferase Family 2"/>
</dbReference>
<dbReference type="KEGG" id="see:SNSL254_A2483"/>
<dbReference type="HOGENOM" id="CLU_033536_0_0_6"/>
<dbReference type="UniPathway" id="UPA00030"/>
<dbReference type="UniPathway" id="UPA00036">
    <property type="reaction ID" value="UER00495"/>
</dbReference>
<dbReference type="Proteomes" id="UP000008824">
    <property type="component" value="Chromosome"/>
</dbReference>
<dbReference type="GO" id="GO:0005886">
    <property type="term" value="C:plasma membrane"/>
    <property type="evidence" value="ECO:0007669"/>
    <property type="project" value="UniProtKB-SubCell"/>
</dbReference>
<dbReference type="GO" id="GO:0016780">
    <property type="term" value="F:phosphotransferase activity, for other substituted phosphate groups"/>
    <property type="evidence" value="ECO:0007669"/>
    <property type="project" value="UniProtKB-UniRule"/>
</dbReference>
<dbReference type="GO" id="GO:0099621">
    <property type="term" value="F:undecaprenyl-phosphate 4-deoxy-4-formamido-L-arabinose transferase activity"/>
    <property type="evidence" value="ECO:0007669"/>
    <property type="project" value="UniProtKB-EC"/>
</dbReference>
<dbReference type="GO" id="GO:0036108">
    <property type="term" value="P:4-amino-4-deoxy-alpha-L-arabinopyranosyl undecaprenyl phosphate biosynthetic process"/>
    <property type="evidence" value="ECO:0007669"/>
    <property type="project" value="UniProtKB-UniRule"/>
</dbReference>
<dbReference type="GO" id="GO:0009245">
    <property type="term" value="P:lipid A biosynthetic process"/>
    <property type="evidence" value="ECO:0007669"/>
    <property type="project" value="UniProtKB-UniRule"/>
</dbReference>
<dbReference type="GO" id="GO:0009103">
    <property type="term" value="P:lipopolysaccharide biosynthetic process"/>
    <property type="evidence" value="ECO:0007669"/>
    <property type="project" value="UniProtKB-UniRule"/>
</dbReference>
<dbReference type="GO" id="GO:0046677">
    <property type="term" value="P:response to antibiotic"/>
    <property type="evidence" value="ECO:0007669"/>
    <property type="project" value="UniProtKB-KW"/>
</dbReference>
<dbReference type="CDD" id="cd04187">
    <property type="entry name" value="DPM1_like_bac"/>
    <property type="match status" value="1"/>
</dbReference>
<dbReference type="FunFam" id="3.90.550.10:FF:000019">
    <property type="entry name" value="Undecaprenyl-phosphate 4-deoxy-4-formamido-L-arabinose transferase"/>
    <property type="match status" value="1"/>
</dbReference>
<dbReference type="Gene3D" id="3.90.550.10">
    <property type="entry name" value="Spore Coat Polysaccharide Biosynthesis Protein SpsA, Chain A"/>
    <property type="match status" value="1"/>
</dbReference>
<dbReference type="HAMAP" id="MF_01164">
    <property type="entry name" value="ArnC_transfer"/>
    <property type="match status" value="1"/>
</dbReference>
<dbReference type="InterPro" id="IPR022857">
    <property type="entry name" value="ArnC_tfrase"/>
</dbReference>
<dbReference type="InterPro" id="IPR001173">
    <property type="entry name" value="Glyco_trans_2-like"/>
</dbReference>
<dbReference type="InterPro" id="IPR050256">
    <property type="entry name" value="Glycosyltransferase_2"/>
</dbReference>
<dbReference type="InterPro" id="IPR029044">
    <property type="entry name" value="Nucleotide-diphossugar_trans"/>
</dbReference>
<dbReference type="NCBIfam" id="NF007986">
    <property type="entry name" value="PRK10714.1"/>
    <property type="match status" value="1"/>
</dbReference>
<dbReference type="PANTHER" id="PTHR48090:SF3">
    <property type="entry name" value="UNDECAPRENYL-PHOSPHATE 4-DEOXY-4-FORMAMIDO-L-ARABINOSE TRANSFERASE"/>
    <property type="match status" value="1"/>
</dbReference>
<dbReference type="PANTHER" id="PTHR48090">
    <property type="entry name" value="UNDECAPRENYL-PHOSPHATE 4-DEOXY-4-FORMAMIDO-L-ARABINOSE TRANSFERASE-RELATED"/>
    <property type="match status" value="1"/>
</dbReference>
<dbReference type="Pfam" id="PF00535">
    <property type="entry name" value="Glycos_transf_2"/>
    <property type="match status" value="1"/>
</dbReference>
<dbReference type="SUPFAM" id="SSF53448">
    <property type="entry name" value="Nucleotide-diphospho-sugar transferases"/>
    <property type="match status" value="1"/>
</dbReference>
<accession>B4SYX0</accession>
<sequence>MFDAAPIKKVSVVIPVYNEQESLPELIRRTTTACESLGKAWEILLIDDGSSDSSAELMVKASQEADSHIISILLNRNYGQHAAIMAGFSHVSGDLIITLDADLQNPPEEIPRLVAKADEGFDVVGTVRQNRQDSLFRKSASKIINLLIQRTTGKAMGDYGCMLRAYRRPIIDTMLRCHERSTFIPILANIFARRATEIPVHHAEREFGDSKYSFMRLINLMYDLVTCLTTTPLRLLSLLGSVIAIGGFSLSVLLIVLRLALGPQWAAEGVFMLFAVLFTFIGAQFIGMGLLGEYIGRIYNDVRARPRYFVQQVIYPESTSFTEESHQ</sequence>
<keyword id="KW-0046">Antibiotic resistance</keyword>
<keyword id="KW-0997">Cell inner membrane</keyword>
<keyword id="KW-1003">Cell membrane</keyword>
<keyword id="KW-0328">Glycosyltransferase</keyword>
<keyword id="KW-0441">Lipid A biosynthesis</keyword>
<keyword id="KW-0444">Lipid biosynthesis</keyword>
<keyword id="KW-0443">Lipid metabolism</keyword>
<keyword id="KW-0448">Lipopolysaccharide biosynthesis</keyword>
<keyword id="KW-0472">Membrane</keyword>
<keyword id="KW-0808">Transferase</keyword>
<keyword id="KW-0812">Transmembrane</keyword>
<keyword id="KW-1133">Transmembrane helix</keyword>
<gene>
    <name evidence="1" type="primary">arnC</name>
    <name type="ordered locus">SNSL254_A2483</name>
</gene>
<feature type="chain" id="PRO_1000137922" description="Undecaprenyl-phosphate 4-deoxy-4-formamido-L-arabinose transferase">
    <location>
        <begin position="1"/>
        <end position="327"/>
    </location>
</feature>
<feature type="topological domain" description="Cytoplasmic" evidence="1">
    <location>
        <begin position="1"/>
        <end position="235"/>
    </location>
</feature>
<feature type="transmembrane region" description="Helical" evidence="1">
    <location>
        <begin position="236"/>
        <end position="256"/>
    </location>
</feature>
<feature type="topological domain" description="Periplasmic" evidence="1">
    <location>
        <begin position="257"/>
        <end position="269"/>
    </location>
</feature>
<feature type="transmembrane region" description="Helical" evidence="1">
    <location>
        <begin position="270"/>
        <end position="290"/>
    </location>
</feature>
<feature type="topological domain" description="Cytoplasmic" evidence="1">
    <location>
        <begin position="291"/>
        <end position="327"/>
    </location>
</feature>
<name>ARNC_SALNS</name>